<organism>
    <name type="scientific">Cyanidium caldarium</name>
    <name type="common">Red alga</name>
    <dbReference type="NCBI Taxonomy" id="2771"/>
    <lineage>
        <taxon>Eukaryota</taxon>
        <taxon>Rhodophyta</taxon>
        <taxon>Bangiophyceae</taxon>
        <taxon>Cyanidiales</taxon>
        <taxon>Cyanidiaceae</taxon>
        <taxon>Cyanidium</taxon>
    </lineage>
</organism>
<comment type="function">
    <text>Allophycocyanin is a photosynthetic bile pigment-protein complex with maximum absorption at approximately 650 nanometers.</text>
</comment>
<comment type="subcellular location">
    <subcellularLocation>
        <location evidence="1">Plastid</location>
        <location evidence="1">Chloroplast thylakoid membrane</location>
        <topology evidence="1">Peripheral membrane protein</topology>
        <orientation evidence="1">Stromal side</orientation>
    </subcellularLocation>
    <text evidence="1">Forms the core of the phycobilisome.</text>
</comment>
<comment type="PTM">
    <text evidence="1">Contains one covalently linked bilin chromophore.</text>
</comment>
<comment type="similarity">
    <text evidence="2">Belongs to the phycobiliprotein family.</text>
</comment>
<geneLocation type="chloroplast"/>
<accession>Q9TLW4</accession>
<sequence>MSFVSKTIIEADHELRYLNGAELEILRAYLNSSEKRIKVIKTLRDREKEIISKASRKLFQIHPDYIGPGGNASGSRQRALCLRDYGWYLRLITYSIIAGDKNPVERIGLLGVRDMYNSLGVPLIGMVDSIQCLKDAALAELKSEEEVKLAEPYFDFVIQNMAQ</sequence>
<feature type="chain" id="PRO_0000199109" description="Allophycocyanin alpha-B chain">
    <location>
        <begin position="1"/>
        <end position="163"/>
    </location>
</feature>
<feature type="binding site" description="covalent" evidence="1">
    <location>
        <position position="81"/>
    </location>
    <ligand>
        <name>(2R,3E)-phycocyanobilin</name>
        <dbReference type="ChEBI" id="CHEBI:85275"/>
    </ligand>
</feature>
<feature type="modified residue" description="N4-methylasparagine" evidence="1">
    <location>
        <position position="71"/>
    </location>
</feature>
<name>APCD_CYACA</name>
<evidence type="ECO:0000250" key="1"/>
<evidence type="ECO:0000305" key="2"/>
<dbReference type="EMBL" id="AF022186">
    <property type="protein sequence ID" value="AAF12940.1"/>
    <property type="molecule type" value="Genomic_DNA"/>
</dbReference>
<dbReference type="RefSeq" id="NP_045154.1">
    <property type="nucleotide sequence ID" value="NC_001840.1"/>
</dbReference>
<dbReference type="SMR" id="Q9TLW4"/>
<dbReference type="GeneID" id="800290"/>
<dbReference type="GO" id="GO:0009535">
    <property type="term" value="C:chloroplast thylakoid membrane"/>
    <property type="evidence" value="ECO:0007669"/>
    <property type="project" value="UniProtKB-SubCell"/>
</dbReference>
<dbReference type="GO" id="GO:0030089">
    <property type="term" value="C:phycobilisome"/>
    <property type="evidence" value="ECO:0007669"/>
    <property type="project" value="UniProtKB-KW"/>
</dbReference>
<dbReference type="GO" id="GO:0015979">
    <property type="term" value="P:photosynthesis"/>
    <property type="evidence" value="ECO:0007669"/>
    <property type="project" value="UniProtKB-KW"/>
</dbReference>
<dbReference type="CDD" id="cd12125">
    <property type="entry name" value="APC_alpha"/>
    <property type="match status" value="1"/>
</dbReference>
<dbReference type="Gene3D" id="1.10.490.20">
    <property type="entry name" value="Phycocyanins"/>
    <property type="match status" value="1"/>
</dbReference>
<dbReference type="InterPro" id="IPR009050">
    <property type="entry name" value="Globin-like_sf"/>
</dbReference>
<dbReference type="InterPro" id="IPR012128">
    <property type="entry name" value="Phycobilisome_asu/bsu"/>
</dbReference>
<dbReference type="InterPro" id="IPR038719">
    <property type="entry name" value="Phycobilisome_asu/bsu_sf"/>
</dbReference>
<dbReference type="PANTHER" id="PTHR34011:SF2">
    <property type="entry name" value="ALLOPHYCOCYANIN ALPHA CHAIN"/>
    <property type="match status" value="1"/>
</dbReference>
<dbReference type="PANTHER" id="PTHR34011">
    <property type="entry name" value="PHYCOBILISOME 32.1 KDA LINKER POLYPEPTIDE, PHYCOCYANIN-ASSOCIATED, ROD 2-RELATED"/>
    <property type="match status" value="1"/>
</dbReference>
<dbReference type="Pfam" id="PF00502">
    <property type="entry name" value="Phycobilisome"/>
    <property type="match status" value="1"/>
</dbReference>
<dbReference type="PIRSF" id="PIRSF000081">
    <property type="entry name" value="Phycocyanin"/>
    <property type="match status" value="1"/>
</dbReference>
<dbReference type="SUPFAM" id="SSF46458">
    <property type="entry name" value="Globin-like"/>
    <property type="match status" value="1"/>
</dbReference>
<reference key="1">
    <citation type="journal article" date="2000" name="J. Mol. Evol.">
        <title>The structure and gene repertoire of an ancient red algal plastid genome.</title>
        <authorList>
            <person name="Gloeckner G."/>
            <person name="Rosenthal A."/>
            <person name="Valentin K.-U."/>
        </authorList>
    </citation>
    <scope>NUCLEOTIDE SEQUENCE [LARGE SCALE GENOMIC DNA]</scope>
    <source>
        <strain>RK-1</strain>
    </source>
</reference>
<gene>
    <name type="primary">apcD</name>
</gene>
<keyword id="KW-0042">Antenna complex</keyword>
<keyword id="KW-0089">Bile pigment</keyword>
<keyword id="KW-0150">Chloroplast</keyword>
<keyword id="KW-0157">Chromophore</keyword>
<keyword id="KW-0249">Electron transport</keyword>
<keyword id="KW-0472">Membrane</keyword>
<keyword id="KW-0488">Methylation</keyword>
<keyword id="KW-0602">Photosynthesis</keyword>
<keyword id="KW-0605">Phycobilisome</keyword>
<keyword id="KW-0934">Plastid</keyword>
<keyword id="KW-0793">Thylakoid</keyword>
<keyword id="KW-0813">Transport</keyword>
<proteinExistence type="inferred from homology"/>
<protein>
    <recommendedName>
        <fullName>Allophycocyanin alpha-B chain</fullName>
    </recommendedName>
    <alternativeName>
        <fullName>Allophycocyanin gamma chain</fullName>
    </alternativeName>
</protein>